<dbReference type="EC" id="6.1.1.16" evidence="1"/>
<dbReference type="EMBL" id="CP000251">
    <property type="protein sequence ID" value="ABC81047.1"/>
    <property type="molecule type" value="Genomic_DNA"/>
</dbReference>
<dbReference type="RefSeq" id="WP_011420330.1">
    <property type="nucleotide sequence ID" value="NC_007760.1"/>
</dbReference>
<dbReference type="SMR" id="Q2IQG7"/>
<dbReference type="STRING" id="290397.Adeh_1273"/>
<dbReference type="KEGG" id="ade:Adeh_1273"/>
<dbReference type="eggNOG" id="COG0215">
    <property type="taxonomic scope" value="Bacteria"/>
</dbReference>
<dbReference type="HOGENOM" id="CLU_013528_0_1_7"/>
<dbReference type="OrthoDB" id="9815130at2"/>
<dbReference type="Proteomes" id="UP000001935">
    <property type="component" value="Chromosome"/>
</dbReference>
<dbReference type="GO" id="GO:0005829">
    <property type="term" value="C:cytosol"/>
    <property type="evidence" value="ECO:0007669"/>
    <property type="project" value="TreeGrafter"/>
</dbReference>
<dbReference type="GO" id="GO:0005524">
    <property type="term" value="F:ATP binding"/>
    <property type="evidence" value="ECO:0007669"/>
    <property type="project" value="UniProtKB-UniRule"/>
</dbReference>
<dbReference type="GO" id="GO:0004817">
    <property type="term" value="F:cysteine-tRNA ligase activity"/>
    <property type="evidence" value="ECO:0007669"/>
    <property type="project" value="UniProtKB-UniRule"/>
</dbReference>
<dbReference type="GO" id="GO:0008270">
    <property type="term" value="F:zinc ion binding"/>
    <property type="evidence" value="ECO:0007669"/>
    <property type="project" value="UniProtKB-UniRule"/>
</dbReference>
<dbReference type="GO" id="GO:0006423">
    <property type="term" value="P:cysteinyl-tRNA aminoacylation"/>
    <property type="evidence" value="ECO:0007669"/>
    <property type="project" value="UniProtKB-UniRule"/>
</dbReference>
<dbReference type="CDD" id="cd00672">
    <property type="entry name" value="CysRS_core"/>
    <property type="match status" value="1"/>
</dbReference>
<dbReference type="FunFam" id="3.40.50.620:FF:000009">
    <property type="entry name" value="Cysteine--tRNA ligase"/>
    <property type="match status" value="1"/>
</dbReference>
<dbReference type="Gene3D" id="1.20.120.1910">
    <property type="entry name" value="Cysteine-tRNA ligase, C-terminal anti-codon recognition domain"/>
    <property type="match status" value="1"/>
</dbReference>
<dbReference type="Gene3D" id="3.40.50.620">
    <property type="entry name" value="HUPs"/>
    <property type="match status" value="1"/>
</dbReference>
<dbReference type="HAMAP" id="MF_00041">
    <property type="entry name" value="Cys_tRNA_synth"/>
    <property type="match status" value="1"/>
</dbReference>
<dbReference type="InterPro" id="IPR015803">
    <property type="entry name" value="Cys-tRNA-ligase"/>
</dbReference>
<dbReference type="InterPro" id="IPR015273">
    <property type="entry name" value="Cys-tRNA-synt_Ia_DALR"/>
</dbReference>
<dbReference type="InterPro" id="IPR024909">
    <property type="entry name" value="Cys-tRNA/MSH_ligase"/>
</dbReference>
<dbReference type="InterPro" id="IPR056411">
    <property type="entry name" value="CysS_C"/>
</dbReference>
<dbReference type="InterPro" id="IPR014729">
    <property type="entry name" value="Rossmann-like_a/b/a_fold"/>
</dbReference>
<dbReference type="InterPro" id="IPR032678">
    <property type="entry name" value="tRNA-synt_1_cat_dom"/>
</dbReference>
<dbReference type="InterPro" id="IPR009080">
    <property type="entry name" value="tRNAsynth_Ia_anticodon-bd"/>
</dbReference>
<dbReference type="NCBIfam" id="TIGR00435">
    <property type="entry name" value="cysS"/>
    <property type="match status" value="1"/>
</dbReference>
<dbReference type="PANTHER" id="PTHR10890:SF3">
    <property type="entry name" value="CYSTEINE--TRNA LIGASE, CYTOPLASMIC"/>
    <property type="match status" value="1"/>
</dbReference>
<dbReference type="PANTHER" id="PTHR10890">
    <property type="entry name" value="CYSTEINYL-TRNA SYNTHETASE"/>
    <property type="match status" value="1"/>
</dbReference>
<dbReference type="Pfam" id="PF23493">
    <property type="entry name" value="CysS_C"/>
    <property type="match status" value="1"/>
</dbReference>
<dbReference type="Pfam" id="PF09190">
    <property type="entry name" value="DALR_2"/>
    <property type="match status" value="1"/>
</dbReference>
<dbReference type="Pfam" id="PF01406">
    <property type="entry name" value="tRNA-synt_1e"/>
    <property type="match status" value="1"/>
</dbReference>
<dbReference type="PRINTS" id="PR00983">
    <property type="entry name" value="TRNASYNTHCYS"/>
</dbReference>
<dbReference type="SMART" id="SM00840">
    <property type="entry name" value="DALR_2"/>
    <property type="match status" value="1"/>
</dbReference>
<dbReference type="SUPFAM" id="SSF47323">
    <property type="entry name" value="Anticodon-binding domain of a subclass of class I aminoacyl-tRNA synthetases"/>
    <property type="match status" value="1"/>
</dbReference>
<dbReference type="SUPFAM" id="SSF52374">
    <property type="entry name" value="Nucleotidylyl transferase"/>
    <property type="match status" value="1"/>
</dbReference>
<reference key="1">
    <citation type="submission" date="2006-01" db="EMBL/GenBank/DDBJ databases">
        <title>Complete sequence of Anaeromyxobacter dehalogenans 2CP-C.</title>
        <authorList>
            <person name="Copeland A."/>
            <person name="Lucas S."/>
            <person name="Lapidus A."/>
            <person name="Barry K."/>
            <person name="Detter J.C."/>
            <person name="Glavina T."/>
            <person name="Hammon N."/>
            <person name="Israni S."/>
            <person name="Pitluck S."/>
            <person name="Brettin T."/>
            <person name="Bruce D."/>
            <person name="Han C."/>
            <person name="Tapia R."/>
            <person name="Gilna P."/>
            <person name="Kiss H."/>
            <person name="Schmutz J."/>
            <person name="Larimer F."/>
            <person name="Land M."/>
            <person name="Kyrpides N."/>
            <person name="Anderson I."/>
            <person name="Sanford R.A."/>
            <person name="Ritalahti K.M."/>
            <person name="Thomas H.S."/>
            <person name="Kirby J.R."/>
            <person name="Zhulin I.B."/>
            <person name="Loeffler F.E."/>
            <person name="Richardson P."/>
        </authorList>
    </citation>
    <scope>NUCLEOTIDE SEQUENCE [LARGE SCALE GENOMIC DNA]</scope>
    <source>
        <strain>2CP-C</strain>
    </source>
</reference>
<organism>
    <name type="scientific">Anaeromyxobacter dehalogenans (strain 2CP-C)</name>
    <dbReference type="NCBI Taxonomy" id="290397"/>
    <lineage>
        <taxon>Bacteria</taxon>
        <taxon>Pseudomonadati</taxon>
        <taxon>Myxococcota</taxon>
        <taxon>Myxococcia</taxon>
        <taxon>Myxococcales</taxon>
        <taxon>Cystobacterineae</taxon>
        <taxon>Anaeromyxobacteraceae</taxon>
        <taxon>Anaeromyxobacter</taxon>
    </lineage>
</organism>
<name>SYC_ANADE</name>
<evidence type="ECO:0000255" key="1">
    <source>
        <dbReference type="HAMAP-Rule" id="MF_00041"/>
    </source>
</evidence>
<sequence length="481" mass="53174">MSIQVHDTLTAQKRELVPLEPGKLRLYVCGPTVYDYSHLGHARCYVVWDVVVRHLRARGLEVRFVRNFTDVDDKIIQRANERGEDPIALASRFADAFHEDMDALGNLRPDVEPRVSGHIPEIVALIARLVERGFAYAPGNGDVYYAVRKFPEYGRLSKRNLDDLIAGARVEPGEAKRDPLDFALWKAAKPGEPAWDSPWGKGRPGWHIECSAMTQKHLGAPIDLHAGGKDLVFPHHTNEIAQSVAATSDGLHAEDFARYWMHNGFVQIDDEKMSKSLGNFFTIRDVLARFDGEALRFFLLGTHYRRDFNFSDQVLAEAERRLSALYETVEKAERLGAGVEPGAEPAFVERARAALDDDFNTPQVLGIVAEAFTEANALADRKGKKSPEEKARLAAFARGARAVGAVLGILGRPPAQALSAIRDRAAARRGIDGSEVERLIAERAAARAAKDFARSDAIRDGLLARGVVLMDGPQGTTWKVE</sequence>
<comment type="catalytic activity">
    <reaction evidence="1">
        <text>tRNA(Cys) + L-cysteine + ATP = L-cysteinyl-tRNA(Cys) + AMP + diphosphate</text>
        <dbReference type="Rhea" id="RHEA:17773"/>
        <dbReference type="Rhea" id="RHEA-COMP:9661"/>
        <dbReference type="Rhea" id="RHEA-COMP:9679"/>
        <dbReference type="ChEBI" id="CHEBI:30616"/>
        <dbReference type="ChEBI" id="CHEBI:33019"/>
        <dbReference type="ChEBI" id="CHEBI:35235"/>
        <dbReference type="ChEBI" id="CHEBI:78442"/>
        <dbReference type="ChEBI" id="CHEBI:78517"/>
        <dbReference type="ChEBI" id="CHEBI:456215"/>
        <dbReference type="EC" id="6.1.1.16"/>
    </reaction>
</comment>
<comment type="cofactor">
    <cofactor evidence="1">
        <name>Zn(2+)</name>
        <dbReference type="ChEBI" id="CHEBI:29105"/>
    </cofactor>
    <text evidence="1">Binds 1 zinc ion per subunit.</text>
</comment>
<comment type="subunit">
    <text evidence="1">Monomer.</text>
</comment>
<comment type="subcellular location">
    <subcellularLocation>
        <location evidence="1">Cytoplasm</location>
    </subcellularLocation>
</comment>
<comment type="similarity">
    <text evidence="1">Belongs to the class-I aminoacyl-tRNA synthetase family.</text>
</comment>
<keyword id="KW-0030">Aminoacyl-tRNA synthetase</keyword>
<keyword id="KW-0067">ATP-binding</keyword>
<keyword id="KW-0963">Cytoplasm</keyword>
<keyword id="KW-0436">Ligase</keyword>
<keyword id="KW-0479">Metal-binding</keyword>
<keyword id="KW-0547">Nucleotide-binding</keyword>
<keyword id="KW-0648">Protein biosynthesis</keyword>
<keyword id="KW-1185">Reference proteome</keyword>
<keyword id="KW-0862">Zinc</keyword>
<proteinExistence type="inferred from homology"/>
<accession>Q2IQG7</accession>
<gene>
    <name evidence="1" type="primary">cysS</name>
    <name type="ordered locus">Adeh_1273</name>
</gene>
<protein>
    <recommendedName>
        <fullName evidence="1">Cysteine--tRNA ligase</fullName>
        <ecNumber evidence="1">6.1.1.16</ecNumber>
    </recommendedName>
    <alternativeName>
        <fullName evidence="1">Cysteinyl-tRNA synthetase</fullName>
        <shortName evidence="1">CysRS</shortName>
    </alternativeName>
</protein>
<feature type="chain" id="PRO_0000240887" description="Cysteine--tRNA ligase">
    <location>
        <begin position="1"/>
        <end position="481"/>
    </location>
</feature>
<feature type="short sequence motif" description="'HIGH' region">
    <location>
        <begin position="31"/>
        <end position="41"/>
    </location>
</feature>
<feature type="short sequence motif" description="'KMSKS' region">
    <location>
        <begin position="272"/>
        <end position="276"/>
    </location>
</feature>
<feature type="binding site" evidence="1">
    <location>
        <position position="29"/>
    </location>
    <ligand>
        <name>Zn(2+)</name>
        <dbReference type="ChEBI" id="CHEBI:29105"/>
    </ligand>
</feature>
<feature type="binding site" evidence="1">
    <location>
        <position position="210"/>
    </location>
    <ligand>
        <name>Zn(2+)</name>
        <dbReference type="ChEBI" id="CHEBI:29105"/>
    </ligand>
</feature>
<feature type="binding site" evidence="1">
    <location>
        <position position="235"/>
    </location>
    <ligand>
        <name>Zn(2+)</name>
        <dbReference type="ChEBI" id="CHEBI:29105"/>
    </ligand>
</feature>
<feature type="binding site" evidence="1">
    <location>
        <position position="239"/>
    </location>
    <ligand>
        <name>Zn(2+)</name>
        <dbReference type="ChEBI" id="CHEBI:29105"/>
    </ligand>
</feature>
<feature type="binding site" evidence="1">
    <location>
        <position position="275"/>
    </location>
    <ligand>
        <name>ATP</name>
        <dbReference type="ChEBI" id="CHEBI:30616"/>
    </ligand>
</feature>